<proteinExistence type="evidence at protein level"/>
<accession>O07834</accession>
<gene>
    <name evidence="8" type="primary">dapb1</name>
</gene>
<evidence type="ECO:0000250" key="1">
    <source>
        <dbReference type="UniProtKB" id="P24555"/>
    </source>
</evidence>
<evidence type="ECO:0000255" key="2">
    <source>
        <dbReference type="PROSITE-ProRule" id="PRU10084"/>
    </source>
</evidence>
<evidence type="ECO:0000269" key="3">
    <source>
    </source>
</evidence>
<evidence type="ECO:0000269" key="4">
    <source>
    </source>
</evidence>
<evidence type="ECO:0000303" key="5">
    <source>
    </source>
</evidence>
<evidence type="ECO:0000303" key="6">
    <source>
    </source>
</evidence>
<evidence type="ECO:0000305" key="7"/>
<evidence type="ECO:0000312" key="8">
    <source>
        <dbReference type="EMBL" id="BAA20518.1"/>
    </source>
</evidence>
<feature type="signal peptide" evidence="3">
    <location>
        <begin position="1"/>
        <end position="23"/>
    </location>
</feature>
<feature type="chain" id="PRO_0000433467" description="Dipeptidyl aminopeptidase BI">
    <location>
        <begin position="24"/>
        <end position="723"/>
    </location>
</feature>
<feature type="active site" description="Charge relay system" evidence="1 2">
    <location>
        <position position="574"/>
    </location>
</feature>
<feature type="active site" description="Charge relay system" evidence="2">
    <location>
        <position position="659"/>
    </location>
</feature>
<feature type="active site" description="Charge relay system" evidence="2">
    <location>
        <position position="694"/>
    </location>
</feature>
<keyword id="KW-0031">Aminopeptidase</keyword>
<keyword id="KW-0903">Direct protein sequencing</keyword>
<keyword id="KW-0378">Hydrolase</keyword>
<keyword id="KW-0645">Protease</keyword>
<keyword id="KW-0720">Serine protease</keyword>
<keyword id="KW-0732">Signal</keyword>
<sequence length="723" mass="80754">MKPTSLLLAATVLMSTPITSALAASATPPDVAKKPHVVKAPHGAERNDEYYWLRDDKRENKEMLAYLNAENAYTDAVMAPLKPLEDKLYDEVVARIKQDDASVPYRERGWWYYARFVTGKDYPVHARRKDGPGVDAVSIQAANAAGDFAGEQVLLDVNALGAGKDYYNVGDYEVSQDNRLLAYADDTNGRRQYTIRFKNLDTGELLPDTVTNAEPNLVWSDDGRTLFYVDKDPETLLSKRVKAHVLGTPASQDALVYEEEDDSFYMGIGRSRDDKFICISVESTVSSEMRCTPAASPGVFTVLAPRERDVEYQADHLGDRWVIRTNADGATNFKIVTAPTDSTSRKDWKDWVAHRDDVFVEGFELFDGFSVVAERANALESLRVIKADGSSDYVKADESAYSMGLSANPETGTDWLRYSYTSMTTPATTYEINTKTGERRQLKQQPVPGYDASKYVTERVWAPARDGKTKIPVTLVYRKDVARDGKAPMLQYAYGSYGASMDPNFSITNVSLLDRGVVYALAHIRGGQEMGRAWYDDGKLYNKINTFTDFIDVTDYLVKEGYAAKDRVAAMGGSAGGLLMGAVSNMAPEKYKVILTLVPFVDVVTTMLDPTIPLTTNEYDEWGNPEEKGYYDYILTYSPYDNLQAKAYPAMFVGTGLWDSQVQYWEPAKYVARLRDLNTGKGPVVFRTNMEAGHGGKSGRFRQYRERAEMFAFMLDQLGVASK</sequence>
<reference evidence="8" key="1">
    <citation type="journal article" date="1998" name="Gene">
        <title>The gene encoding dipeptidyl aminopeptidase BI from Pseudomonas sp. WO24: cloning, sequencing and expression in Escherichia coli.</title>
        <authorList>
            <person name="Ogasawara W."/>
            <person name="Kobayashi G."/>
            <person name="Ishimaru S."/>
            <person name="Okada H."/>
            <person name="Morikawa Y."/>
        </authorList>
    </citation>
    <scope>NUCLEOTIDE SEQUENCE [GENOMIC DNA]</scope>
    <scope>PARTIAL PROTEIN SEQUENCE</scope>
    <scope>CATALYTIC ACTIVITY</scope>
    <scope>ACTIVITY REGULATION</scope>
    <source>
        <strain evidence="8">WO24</strain>
    </source>
</reference>
<reference key="2">
    <citation type="journal article" date="1996" name="J. Bacteriol.">
        <title>A novel dipeptidyl aminopeptidase from Pseudomonas sp. strain WO24.</title>
        <authorList>
            <person name="Ogasawara W."/>
            <person name="Ochiai K."/>
            <person name="Ando K."/>
            <person name="Yano K."/>
            <person name="Yamasaki M."/>
            <person name="Okada H."/>
            <person name="Morikawa Y."/>
        </authorList>
    </citation>
    <scope>PROTEIN SEQUENCE OF 24-41</scope>
    <scope>FUNCTION</scope>
    <scope>CATALYTIC ACTIVITY</scope>
    <scope>ACTIVITY REGULATION</scope>
    <scope>BIOPHYSICOCHEMICAL PROPERTIES</scope>
    <scope>SUBSTRATE SPECIFICITY</scope>
    <scope>SUBUNIT</scope>
    <source>
        <strain evidence="5">WO24</strain>
    </source>
</reference>
<comment type="function">
    <text evidence="3">Sequentially removes dipeptide units (NH3-P2-P1-) from the amino termini of peptides and proteins. Is able to catalyze the removal of Asp-Arg from the amino termini of angiotensins I and II. Has slight endopeptidase activity on N-terminally blocked peptide derivatives which contain arginine residues at the P1 position. Does not hydrolyze Ala-Ala-Ala and Ala-Ala-Ala-Ala substrates or insulin beta chain.</text>
</comment>
<comment type="activity regulation">
    <text evidence="3 4">Nearly completely inhibited by 0.5 mM ZnCl(2), 0.1 mM N-tosyl-L-lysyl chloromethyl ketone (TLCK) and 0.1 mM leupeptin. Strongly inhibited by 0.5 mM CoCl(2) and 0.1 mM chymostatin. Activity is hardly affected by general serine protease inhibitors phenylmethanesulfonyl fluoride (PMSF), diisopropyl fluorophosphate (DFP) and N-tosyl-L-phenyl-alanyl chloromethyl ketone (TPCK) or by aspartyl protease inhibitor pepstatin A or by CaCl(2) and EDTA. Cysteine protease inhibitors, such as N-ethylmaleimide (NEM), iodoacetic acid and L-trans-epoxysuccinyl-leucylamido(4-guanido)butane (E-64) have no effect on activity.</text>
</comment>
<comment type="biophysicochemical properties">
    <kinetics>
        <KM evidence="3">0.25 mM for Gly-Arg-pNA (at pH 9 and 37 degrees Celsius)</KM>
        <KM evidence="3">0.019 mM for Arg-Arg-4-methoxy-beta-naphthylamide (Arg-Arg-MNA) (at pH 9 and 37 degrees Celsius)</KM>
        <KM evidence="3">0.052 mM for Gly-Arg-MNA (at pH 9 and 37 degrees Celsius)</KM>
        <Vmax evidence="3">195.0 umol/min/mg enzyme with Gly-Arg-pNA as substrate (at pH 9 and 37 degrees Celsius)</Vmax>
        <Vmax evidence="3">145.0 umol/min/mg enzyme with Arg-Arg-MNA as substrate (at pH 9 and 37 degrees Celsius)</Vmax>
        <Vmax evidence="3">95.0 umol/min/mg enzyme with Gly-Arg-MNA as substrate (at pH 9 and 37 degrees Celsius)</Vmax>
    </kinetics>
    <phDependence>
        <text evidence="3">Optimum pH is 9.0 for the hydrolysis of Gly-Arg-pNA. No hydrolysis of Gly-Arg-pNA is detected below pH 5.5 or above pH 11.5. Stable over a broad pH range of between 7.5 and 10.0.</text>
    </phDependence>
    <temperatureDependence>
        <text>Optimum temperature is between 35 and 40 degrees Celsius for the hydrolysis of Gly-Arg-pNA. Stable for at least 30 minutes below 20 degrees Celsius.</text>
    </temperatureDependence>
</comment>
<comment type="subunit">
    <text evidence="3">Monomer.</text>
</comment>
<comment type="similarity">
    <text evidence="7">Belongs to the peptidase S9A family.</text>
</comment>
<protein>
    <recommendedName>
        <fullName evidence="6 8">Dipeptidyl aminopeptidase BI</fullName>
        <shortName evidence="5 6">DAP BI</shortName>
        <ecNumber evidence="3 4">3.4.14.-</ecNumber>
    </recommendedName>
</protein>
<organism>
    <name type="scientific">Pseudoxanthomonas mexicana</name>
    <dbReference type="NCBI Taxonomy" id="128785"/>
    <lineage>
        <taxon>Bacteria</taxon>
        <taxon>Pseudomonadati</taxon>
        <taxon>Pseudomonadota</taxon>
        <taxon>Gammaproteobacteria</taxon>
        <taxon>Lysobacterales</taxon>
        <taxon>Lysobacteraceae</taxon>
        <taxon>Pseudoxanthomonas</taxon>
    </lineage>
</organism>
<name>DAPB1_PSEMX</name>
<dbReference type="EC" id="3.4.14.-" evidence="3 4"/>
<dbReference type="EMBL" id="AB004795">
    <property type="protein sequence ID" value="BAA20518.1"/>
    <property type="molecule type" value="Genomic_DNA"/>
</dbReference>
<dbReference type="SMR" id="O07834"/>
<dbReference type="ESTHER" id="psesp-DAP">
    <property type="family name" value="S9N_PREPL_Peptidase_S9"/>
</dbReference>
<dbReference type="MEROPS" id="S09.010"/>
<dbReference type="GO" id="GO:0004177">
    <property type="term" value="F:aminopeptidase activity"/>
    <property type="evidence" value="ECO:0007669"/>
    <property type="project" value="UniProtKB-KW"/>
</dbReference>
<dbReference type="GO" id="GO:0008239">
    <property type="term" value="F:dipeptidyl-peptidase activity"/>
    <property type="evidence" value="ECO:0000314"/>
    <property type="project" value="UniProtKB"/>
</dbReference>
<dbReference type="GO" id="GO:0004252">
    <property type="term" value="F:serine-type endopeptidase activity"/>
    <property type="evidence" value="ECO:0007669"/>
    <property type="project" value="InterPro"/>
</dbReference>
<dbReference type="GO" id="GO:0051603">
    <property type="term" value="P:proteolysis involved in protein catabolic process"/>
    <property type="evidence" value="ECO:0000314"/>
    <property type="project" value="UniProtKB"/>
</dbReference>
<dbReference type="FunFam" id="3.40.50.1820:FF:000005">
    <property type="entry name" value="Prolyl endopeptidase"/>
    <property type="match status" value="1"/>
</dbReference>
<dbReference type="Gene3D" id="3.40.50.1820">
    <property type="entry name" value="alpha/beta hydrolase"/>
    <property type="match status" value="1"/>
</dbReference>
<dbReference type="Gene3D" id="2.130.10.120">
    <property type="entry name" value="Prolyl oligopeptidase, N-terminal domain"/>
    <property type="match status" value="1"/>
</dbReference>
<dbReference type="InterPro" id="IPR029058">
    <property type="entry name" value="AB_hydrolase_fold"/>
</dbReference>
<dbReference type="InterPro" id="IPR023302">
    <property type="entry name" value="Pept_S9A_N"/>
</dbReference>
<dbReference type="InterPro" id="IPR001375">
    <property type="entry name" value="Peptidase_S9_cat"/>
</dbReference>
<dbReference type="InterPro" id="IPR002470">
    <property type="entry name" value="Peptidase_S9A"/>
</dbReference>
<dbReference type="InterPro" id="IPR051543">
    <property type="entry name" value="Serine_Peptidase_S9A"/>
</dbReference>
<dbReference type="PANTHER" id="PTHR11757:SF19">
    <property type="entry name" value="PROLYL ENDOPEPTIDASE-LIKE"/>
    <property type="match status" value="1"/>
</dbReference>
<dbReference type="PANTHER" id="PTHR11757">
    <property type="entry name" value="PROTEASE FAMILY S9A OLIGOPEPTIDASE"/>
    <property type="match status" value="1"/>
</dbReference>
<dbReference type="Pfam" id="PF00326">
    <property type="entry name" value="Peptidase_S9"/>
    <property type="match status" value="1"/>
</dbReference>
<dbReference type="Pfam" id="PF02897">
    <property type="entry name" value="Peptidase_S9_N"/>
    <property type="match status" value="1"/>
</dbReference>
<dbReference type="PRINTS" id="PR00862">
    <property type="entry name" value="PROLIGOPTASE"/>
</dbReference>
<dbReference type="SUPFAM" id="SSF53474">
    <property type="entry name" value="alpha/beta-Hydrolases"/>
    <property type="match status" value="1"/>
</dbReference>
<dbReference type="SUPFAM" id="SSF50993">
    <property type="entry name" value="Peptidase/esterase 'gauge' domain"/>
    <property type="match status" value="1"/>
</dbReference>